<proteinExistence type="evidence at transcript level"/>
<organism>
    <name type="scientific">Drosophila melanogaster</name>
    <name type="common">Fruit fly</name>
    <dbReference type="NCBI Taxonomy" id="7227"/>
    <lineage>
        <taxon>Eukaryota</taxon>
        <taxon>Metazoa</taxon>
        <taxon>Ecdysozoa</taxon>
        <taxon>Arthropoda</taxon>
        <taxon>Hexapoda</taxon>
        <taxon>Insecta</taxon>
        <taxon>Pterygota</taxon>
        <taxon>Neoptera</taxon>
        <taxon>Endopterygota</taxon>
        <taxon>Diptera</taxon>
        <taxon>Brachycera</taxon>
        <taxon>Muscomorpha</taxon>
        <taxon>Ephydroidea</taxon>
        <taxon>Drosophilidae</taxon>
        <taxon>Drosophila</taxon>
        <taxon>Sophophora</taxon>
    </lineage>
</organism>
<reference key="1">
    <citation type="journal article" date="2008" name="Fly">
        <title>The Drosophila protein palmitoylome: characterizing palmitoyl-thioesterases and DHHC palmitoyl-transferases.</title>
        <authorList>
            <person name="Bannan B.A."/>
            <person name="Van Etten J."/>
            <person name="Kohler J.A."/>
            <person name="Tsoi Y."/>
            <person name="Hansen N.M."/>
            <person name="Sigmon S."/>
            <person name="Fowler E."/>
            <person name="Buff H."/>
            <person name="Williams T.S."/>
            <person name="Ault J.G."/>
            <person name="Glaser R.L."/>
            <person name="Korey C.A."/>
        </authorList>
    </citation>
    <scope>NUCLEOTIDE SEQUENCE [MRNA]</scope>
    <scope>SUBCELLULAR LOCATION</scope>
    <scope>TISSUE SPECIFICITY</scope>
    <scope>DEVELOPMENTAL STAGE</scope>
    <source>
        <strain>Berkeley</strain>
        <tissue>Head</tissue>
    </source>
</reference>
<reference key="2">
    <citation type="journal article" date="2000" name="Science">
        <title>The genome sequence of Drosophila melanogaster.</title>
        <authorList>
            <person name="Adams M.D."/>
            <person name="Celniker S.E."/>
            <person name="Holt R.A."/>
            <person name="Evans C.A."/>
            <person name="Gocayne J.D."/>
            <person name="Amanatides P.G."/>
            <person name="Scherer S.E."/>
            <person name="Li P.W."/>
            <person name="Hoskins R.A."/>
            <person name="Galle R.F."/>
            <person name="George R.A."/>
            <person name="Lewis S.E."/>
            <person name="Richards S."/>
            <person name="Ashburner M."/>
            <person name="Henderson S.N."/>
            <person name="Sutton G.G."/>
            <person name="Wortman J.R."/>
            <person name="Yandell M.D."/>
            <person name="Zhang Q."/>
            <person name="Chen L.X."/>
            <person name="Brandon R.C."/>
            <person name="Rogers Y.-H.C."/>
            <person name="Blazej R.G."/>
            <person name="Champe M."/>
            <person name="Pfeiffer B.D."/>
            <person name="Wan K.H."/>
            <person name="Doyle C."/>
            <person name="Baxter E.G."/>
            <person name="Helt G."/>
            <person name="Nelson C.R."/>
            <person name="Miklos G.L.G."/>
            <person name="Abril J.F."/>
            <person name="Agbayani A."/>
            <person name="An H.-J."/>
            <person name="Andrews-Pfannkoch C."/>
            <person name="Baldwin D."/>
            <person name="Ballew R.M."/>
            <person name="Basu A."/>
            <person name="Baxendale J."/>
            <person name="Bayraktaroglu L."/>
            <person name="Beasley E.M."/>
            <person name="Beeson K.Y."/>
            <person name="Benos P.V."/>
            <person name="Berman B.P."/>
            <person name="Bhandari D."/>
            <person name="Bolshakov S."/>
            <person name="Borkova D."/>
            <person name="Botchan M.R."/>
            <person name="Bouck J."/>
            <person name="Brokstein P."/>
            <person name="Brottier P."/>
            <person name="Burtis K.C."/>
            <person name="Busam D.A."/>
            <person name="Butler H."/>
            <person name="Cadieu E."/>
            <person name="Center A."/>
            <person name="Chandra I."/>
            <person name="Cherry J.M."/>
            <person name="Cawley S."/>
            <person name="Dahlke C."/>
            <person name="Davenport L.B."/>
            <person name="Davies P."/>
            <person name="de Pablos B."/>
            <person name="Delcher A."/>
            <person name="Deng Z."/>
            <person name="Mays A.D."/>
            <person name="Dew I."/>
            <person name="Dietz S.M."/>
            <person name="Dodson K."/>
            <person name="Doup L.E."/>
            <person name="Downes M."/>
            <person name="Dugan-Rocha S."/>
            <person name="Dunkov B.C."/>
            <person name="Dunn P."/>
            <person name="Durbin K.J."/>
            <person name="Evangelista C.C."/>
            <person name="Ferraz C."/>
            <person name="Ferriera S."/>
            <person name="Fleischmann W."/>
            <person name="Fosler C."/>
            <person name="Gabrielian A.E."/>
            <person name="Garg N.S."/>
            <person name="Gelbart W.M."/>
            <person name="Glasser K."/>
            <person name="Glodek A."/>
            <person name="Gong F."/>
            <person name="Gorrell J.H."/>
            <person name="Gu Z."/>
            <person name="Guan P."/>
            <person name="Harris M."/>
            <person name="Harris N.L."/>
            <person name="Harvey D.A."/>
            <person name="Heiman T.J."/>
            <person name="Hernandez J.R."/>
            <person name="Houck J."/>
            <person name="Hostin D."/>
            <person name="Houston K.A."/>
            <person name="Howland T.J."/>
            <person name="Wei M.-H."/>
            <person name="Ibegwam C."/>
            <person name="Jalali M."/>
            <person name="Kalush F."/>
            <person name="Karpen G.H."/>
            <person name="Ke Z."/>
            <person name="Kennison J.A."/>
            <person name="Ketchum K.A."/>
            <person name="Kimmel B.E."/>
            <person name="Kodira C.D."/>
            <person name="Kraft C.L."/>
            <person name="Kravitz S."/>
            <person name="Kulp D."/>
            <person name="Lai Z."/>
            <person name="Lasko P."/>
            <person name="Lei Y."/>
            <person name="Levitsky A.A."/>
            <person name="Li J.H."/>
            <person name="Li Z."/>
            <person name="Liang Y."/>
            <person name="Lin X."/>
            <person name="Liu X."/>
            <person name="Mattei B."/>
            <person name="McIntosh T.C."/>
            <person name="McLeod M.P."/>
            <person name="McPherson D."/>
            <person name="Merkulov G."/>
            <person name="Milshina N.V."/>
            <person name="Mobarry C."/>
            <person name="Morris J."/>
            <person name="Moshrefi A."/>
            <person name="Mount S.M."/>
            <person name="Moy M."/>
            <person name="Murphy B."/>
            <person name="Murphy L."/>
            <person name="Muzny D.M."/>
            <person name="Nelson D.L."/>
            <person name="Nelson D.R."/>
            <person name="Nelson K.A."/>
            <person name="Nixon K."/>
            <person name="Nusskern D.R."/>
            <person name="Pacleb J.M."/>
            <person name="Palazzolo M."/>
            <person name="Pittman G.S."/>
            <person name="Pan S."/>
            <person name="Pollard J."/>
            <person name="Puri V."/>
            <person name="Reese M.G."/>
            <person name="Reinert K."/>
            <person name="Remington K."/>
            <person name="Saunders R.D.C."/>
            <person name="Scheeler F."/>
            <person name="Shen H."/>
            <person name="Shue B.C."/>
            <person name="Siden-Kiamos I."/>
            <person name="Simpson M."/>
            <person name="Skupski M.P."/>
            <person name="Smith T.J."/>
            <person name="Spier E."/>
            <person name="Spradling A.C."/>
            <person name="Stapleton M."/>
            <person name="Strong R."/>
            <person name="Sun E."/>
            <person name="Svirskas R."/>
            <person name="Tector C."/>
            <person name="Turner R."/>
            <person name="Venter E."/>
            <person name="Wang A.H."/>
            <person name="Wang X."/>
            <person name="Wang Z.-Y."/>
            <person name="Wassarman D.A."/>
            <person name="Weinstock G.M."/>
            <person name="Weissenbach J."/>
            <person name="Williams S.M."/>
            <person name="Woodage T."/>
            <person name="Worley K.C."/>
            <person name="Wu D."/>
            <person name="Yang S."/>
            <person name="Yao Q.A."/>
            <person name="Ye J."/>
            <person name="Yeh R.-F."/>
            <person name="Zaveri J.S."/>
            <person name="Zhan M."/>
            <person name="Zhang G."/>
            <person name="Zhao Q."/>
            <person name="Zheng L."/>
            <person name="Zheng X.H."/>
            <person name="Zhong F.N."/>
            <person name="Zhong W."/>
            <person name="Zhou X."/>
            <person name="Zhu S.C."/>
            <person name="Zhu X."/>
            <person name="Smith H.O."/>
            <person name="Gibbs R.A."/>
            <person name="Myers E.W."/>
            <person name="Rubin G.M."/>
            <person name="Venter J.C."/>
        </authorList>
    </citation>
    <scope>NUCLEOTIDE SEQUENCE [LARGE SCALE GENOMIC DNA]</scope>
    <source>
        <strain>Berkeley</strain>
    </source>
</reference>
<reference key="3">
    <citation type="journal article" date="2002" name="Genome Biol.">
        <title>Annotation of the Drosophila melanogaster euchromatic genome: a systematic review.</title>
        <authorList>
            <person name="Misra S."/>
            <person name="Crosby M.A."/>
            <person name="Mungall C.J."/>
            <person name="Matthews B.B."/>
            <person name="Campbell K.S."/>
            <person name="Hradecky P."/>
            <person name="Huang Y."/>
            <person name="Kaminker J.S."/>
            <person name="Millburn G.H."/>
            <person name="Prochnik S.E."/>
            <person name="Smith C.D."/>
            <person name="Tupy J.L."/>
            <person name="Whitfield E.J."/>
            <person name="Bayraktaroglu L."/>
            <person name="Berman B.P."/>
            <person name="Bettencourt B.R."/>
            <person name="Celniker S.E."/>
            <person name="de Grey A.D.N.J."/>
            <person name="Drysdale R.A."/>
            <person name="Harris N.L."/>
            <person name="Richter J."/>
            <person name="Russo S."/>
            <person name="Schroeder A.J."/>
            <person name="Shu S.Q."/>
            <person name="Stapleton M."/>
            <person name="Yamada C."/>
            <person name="Ashburner M."/>
            <person name="Gelbart W.M."/>
            <person name="Rubin G.M."/>
            <person name="Lewis S.E."/>
        </authorList>
    </citation>
    <scope>GENOME REANNOTATION</scope>
    <source>
        <strain>Berkeley</strain>
    </source>
</reference>
<reference key="4">
    <citation type="submission" date="2005-03" db="EMBL/GenBank/DDBJ databases">
        <authorList>
            <person name="Stapleton M."/>
            <person name="Carlson J.W."/>
            <person name="Chavez C."/>
            <person name="Frise E."/>
            <person name="George R.A."/>
            <person name="Pacleb J.M."/>
            <person name="Park S."/>
            <person name="Wan K.H."/>
            <person name="Yu C."/>
            <person name="Rubin G.M."/>
            <person name="Celniker S.E."/>
        </authorList>
    </citation>
    <scope>NUCLEOTIDE SEQUENCE [LARGE SCALE MRNA]</scope>
    <source>
        <strain>Berkeley</strain>
        <tissue>Head</tissue>
    </source>
</reference>
<reference key="5">
    <citation type="journal article" date="2002" name="Genome Biol.">
        <title>A Drosophila full-length cDNA resource.</title>
        <authorList>
            <person name="Stapleton M."/>
            <person name="Carlson J.W."/>
            <person name="Brokstein P."/>
            <person name="Yu C."/>
            <person name="Champe M."/>
            <person name="George R.A."/>
            <person name="Guarin H."/>
            <person name="Kronmiller B."/>
            <person name="Pacleb J.M."/>
            <person name="Park S."/>
            <person name="Wan K.H."/>
            <person name="Rubin G.M."/>
            <person name="Celniker S.E."/>
        </authorList>
    </citation>
    <scope>NUCLEOTIDE SEQUENCE [LARGE SCALE MRNA] OF 38-288</scope>
    <source>
        <strain>Berkeley</strain>
        <tissue>Head</tissue>
    </source>
</reference>
<keyword id="KW-0325">Glycoprotein</keyword>
<keyword id="KW-0378">Hydrolase</keyword>
<keyword id="KW-0458">Lysosome</keyword>
<keyword id="KW-1185">Reference proteome</keyword>
<keyword id="KW-0732">Signal</keyword>
<accession>Q9VKH6</accession>
<accession>Q95SL2</accession>
<dbReference type="EC" id="3.1.2.2" evidence="1"/>
<dbReference type="EMBL" id="AE014134">
    <property type="protein sequence ID" value="AAF53092.1"/>
    <property type="molecule type" value="Genomic_DNA"/>
</dbReference>
<dbReference type="EMBL" id="BT021446">
    <property type="protein sequence ID" value="AAX33594.1"/>
    <property type="molecule type" value="mRNA"/>
</dbReference>
<dbReference type="EMBL" id="AY060722">
    <property type="protein sequence ID" value="AAL28270.1"/>
    <property type="status" value="ALT_INIT"/>
    <property type="molecule type" value="mRNA"/>
</dbReference>
<dbReference type="RefSeq" id="NP_609500.1">
    <property type="nucleotide sequence ID" value="NM_135656.3"/>
</dbReference>
<dbReference type="SMR" id="Q9VKH6"/>
<dbReference type="BioGRID" id="60621">
    <property type="interactions" value="2"/>
</dbReference>
<dbReference type="FunCoup" id="Q9VKH6">
    <property type="interactions" value="922"/>
</dbReference>
<dbReference type="IntAct" id="Q9VKH6">
    <property type="interactions" value="2"/>
</dbReference>
<dbReference type="STRING" id="7227.FBpp0079801"/>
<dbReference type="ESTHER" id="drome-CG4851">
    <property type="family name" value="Palmitoyl-protein_thioesterase"/>
</dbReference>
<dbReference type="GlyCosmos" id="Q9VKH6">
    <property type="glycosylation" value="1 site, No reported glycans"/>
</dbReference>
<dbReference type="GlyGen" id="Q9VKH6">
    <property type="glycosylation" value="1 site"/>
</dbReference>
<dbReference type="PaxDb" id="7227-FBpp0079801"/>
<dbReference type="DNASU" id="34564"/>
<dbReference type="EnsemblMetazoa" id="FBtr0080212">
    <property type="protein sequence ID" value="FBpp0079801"/>
    <property type="gene ID" value="FBgn0032358"/>
</dbReference>
<dbReference type="GeneID" id="34564"/>
<dbReference type="KEGG" id="dme:Dmel_CG4851"/>
<dbReference type="AGR" id="FB:FBgn0032358"/>
<dbReference type="CTD" id="9374"/>
<dbReference type="FlyBase" id="FBgn0032358">
    <property type="gene designation" value="Ppt2"/>
</dbReference>
<dbReference type="VEuPathDB" id="VectorBase:FBgn0032358"/>
<dbReference type="eggNOG" id="KOG2541">
    <property type="taxonomic scope" value="Eukaryota"/>
</dbReference>
<dbReference type="GeneTree" id="ENSGT00940000155779"/>
<dbReference type="HOGENOM" id="CLU_050129_1_0_1"/>
<dbReference type="InParanoid" id="Q9VKH6"/>
<dbReference type="OMA" id="AWHTRRD"/>
<dbReference type="OrthoDB" id="155976at2759"/>
<dbReference type="PhylomeDB" id="Q9VKH6"/>
<dbReference type="Reactome" id="R-DME-75105">
    <property type="pathway name" value="Fatty acyl-CoA biosynthesis"/>
</dbReference>
<dbReference type="BioGRID-ORCS" id="34564">
    <property type="hits" value="0 hits in 1 CRISPR screen"/>
</dbReference>
<dbReference type="GenomeRNAi" id="34564"/>
<dbReference type="PRO" id="PR:Q9VKH6"/>
<dbReference type="Proteomes" id="UP000000803">
    <property type="component" value="Chromosome 2L"/>
</dbReference>
<dbReference type="Bgee" id="FBgn0032358">
    <property type="expression patterns" value="Expressed in oviduct (Drosophila) and 106 other cell types or tissues"/>
</dbReference>
<dbReference type="GO" id="GO:0005576">
    <property type="term" value="C:extracellular region"/>
    <property type="evidence" value="ECO:0000318"/>
    <property type="project" value="GO_Central"/>
</dbReference>
<dbReference type="GO" id="GO:0005764">
    <property type="term" value="C:lysosome"/>
    <property type="evidence" value="ECO:0000314"/>
    <property type="project" value="UniProtKB"/>
</dbReference>
<dbReference type="GO" id="GO:0047617">
    <property type="term" value="F:fatty acyl-CoA hydrolase activity"/>
    <property type="evidence" value="ECO:0000250"/>
    <property type="project" value="UniProtKB"/>
</dbReference>
<dbReference type="GO" id="GO:0098599">
    <property type="term" value="F:palmitoyl hydrolase activity"/>
    <property type="evidence" value="ECO:0000250"/>
    <property type="project" value="UniProtKB"/>
</dbReference>
<dbReference type="GO" id="GO:0008474">
    <property type="term" value="F:palmitoyl-(protein) hydrolase activity"/>
    <property type="evidence" value="ECO:0000316"/>
    <property type="project" value="FlyBase"/>
</dbReference>
<dbReference type="GO" id="GO:0016790">
    <property type="term" value="F:thiolester hydrolase activity"/>
    <property type="evidence" value="ECO:0000250"/>
    <property type="project" value="UniProtKB"/>
</dbReference>
<dbReference type="FunFam" id="3.40.50.1820:FF:000037">
    <property type="entry name" value="Lysosomal thioesterase PPT2 homolog"/>
    <property type="match status" value="1"/>
</dbReference>
<dbReference type="Gene3D" id="3.40.50.1820">
    <property type="entry name" value="alpha/beta hydrolase"/>
    <property type="match status" value="1"/>
</dbReference>
<dbReference type="InterPro" id="IPR029058">
    <property type="entry name" value="AB_hydrolase_fold"/>
</dbReference>
<dbReference type="PANTHER" id="PTHR11247:SF27">
    <property type="entry name" value="LYSOSOMAL THIOESTERASE PPT2"/>
    <property type="match status" value="1"/>
</dbReference>
<dbReference type="PANTHER" id="PTHR11247">
    <property type="entry name" value="PALMITOYL-PROTEIN THIOESTERASE/DOLICHYLDIPHOSPHATASE 1"/>
    <property type="match status" value="1"/>
</dbReference>
<dbReference type="Pfam" id="PF02089">
    <property type="entry name" value="Palm_thioest"/>
    <property type="match status" value="1"/>
</dbReference>
<dbReference type="SUPFAM" id="SSF53474">
    <property type="entry name" value="alpha/beta-Hydrolases"/>
    <property type="match status" value="1"/>
</dbReference>
<dbReference type="PROSITE" id="PS00120">
    <property type="entry name" value="LIPASE_SER"/>
    <property type="match status" value="1"/>
</dbReference>
<protein>
    <recommendedName>
        <fullName>Lysosomal thioesterase PPT2 homolog</fullName>
        <shortName>PPT-2</shortName>
        <ecNumber evidence="1">3.1.2.2</ecNumber>
    </recommendedName>
</protein>
<comment type="function">
    <text evidence="1">Catalyzes the cleavage of thioester bonds from S-palmitoyl-CoA or S-palmitoyl-N-acetylcysteamine (unbranched structures) but does not have activity against palmitoylcysteine or palmitoylated proteins, branched structures or bulky head groups. Conversely, hydrolyzes both long and short chain fatty acyl-CoA substrate.</text>
</comment>
<comment type="catalytic activity">
    <reaction evidence="1">
        <text>hexadecanoyl-CoA + H2O = hexadecanoate + CoA + H(+)</text>
        <dbReference type="Rhea" id="RHEA:16645"/>
        <dbReference type="ChEBI" id="CHEBI:7896"/>
        <dbReference type="ChEBI" id="CHEBI:15377"/>
        <dbReference type="ChEBI" id="CHEBI:15378"/>
        <dbReference type="ChEBI" id="CHEBI:57287"/>
        <dbReference type="ChEBI" id="CHEBI:57379"/>
        <dbReference type="EC" id="3.1.2.2"/>
    </reaction>
</comment>
<comment type="catalytic activity">
    <reaction evidence="1">
        <text>S-hexadecanoyl-N-acetylcysteamine + H2O = N-acetylcysteamine + hexadecanoate + H(+)</text>
        <dbReference type="Rhea" id="RHEA:84099"/>
        <dbReference type="ChEBI" id="CHEBI:7896"/>
        <dbReference type="ChEBI" id="CHEBI:15377"/>
        <dbReference type="ChEBI" id="CHEBI:15378"/>
        <dbReference type="ChEBI" id="CHEBI:74410"/>
        <dbReference type="ChEBI" id="CHEBI:233601"/>
    </reaction>
</comment>
<comment type="subcellular location">
    <subcellularLocation>
        <location evidence="3">Lysosome</location>
    </subcellularLocation>
</comment>
<comment type="tissue specificity">
    <text evidence="3">Expressed in adult head and crop.</text>
</comment>
<comment type="developmental stage">
    <text evidence="3">Low level expression is detected in embryonic development with no distinct tissue specific enrichment. Expression levels increase at third larval instar stage and continue through to adulthood.</text>
</comment>
<comment type="similarity">
    <text evidence="4">Belongs to the palmitoyl-protein thioesterase family.</text>
</comment>
<comment type="sequence caution" evidence="4">
    <conflict type="erroneous initiation">
        <sequence resource="EMBL-CDS" id="AAL28270"/>
    </conflict>
</comment>
<sequence>MRLRLQVLVALLTCSSISVSLAYKPVVILHGILSGAESMASLVREIEEFHPGTIVYNCDKFNGWYSLENAWRQVDQVRDYLNEVGKLHPEGIIVLGYSQGGLLARAAIQSLPEHNVKTFISLSSPQAGQYGTSFLHLIFPDLAAKTAFELFYSRVGQHTSVGGYWNDPQRQDLYLKYSEFLPLINNEKKTSNSTSFKMGMVRLNKLVMIGGPNDDVITPWQSSHFGYFDENMDVIPFIRRPIFTSDSIGIRTLQEAGKLIIVVKPHVHHLAWHTRRDVIHEVIFPYLD</sequence>
<evidence type="ECO:0000250" key="1">
    <source>
        <dbReference type="UniProtKB" id="Q9UMR5"/>
    </source>
</evidence>
<evidence type="ECO:0000255" key="2"/>
<evidence type="ECO:0000269" key="3">
    <source>
    </source>
</evidence>
<evidence type="ECO:0000305" key="4"/>
<gene>
    <name type="primary">Ppt2</name>
    <name type="ORF">CG4851</name>
</gene>
<name>PPT2_DROME</name>
<feature type="signal peptide" evidence="2">
    <location>
        <begin position="1"/>
        <end position="22"/>
    </location>
</feature>
<feature type="chain" id="PRO_0000247509" description="Lysosomal thioesterase PPT2 homolog">
    <location>
        <begin position="23"/>
        <end position="288"/>
    </location>
</feature>
<feature type="active site" description="Nucleophile" evidence="1">
    <location>
        <position position="98"/>
    </location>
</feature>
<feature type="active site" evidence="1">
    <location>
        <position position="214"/>
    </location>
</feature>
<feature type="active site" evidence="1">
    <location>
        <position position="269"/>
    </location>
</feature>
<feature type="glycosylation site" description="N-linked (GlcNAc...) asparagine" evidence="2">
    <location>
        <position position="192"/>
    </location>
</feature>